<dbReference type="EMBL" id="AM039663">
    <property type="protein sequence ID" value="CAJ01671.1"/>
    <property type="molecule type" value="mRNA"/>
</dbReference>
<dbReference type="SMR" id="Q2UXR3"/>
<dbReference type="GO" id="GO:0005576">
    <property type="term" value="C:extracellular region"/>
    <property type="evidence" value="ECO:0007669"/>
    <property type="project" value="UniProtKB-SubCell"/>
</dbReference>
<dbReference type="GO" id="GO:0050829">
    <property type="term" value="P:defense response to Gram-negative bacterium"/>
    <property type="evidence" value="ECO:0007669"/>
    <property type="project" value="UniProtKB-ARBA"/>
</dbReference>
<dbReference type="GO" id="GO:0050830">
    <property type="term" value="P:defense response to Gram-positive bacterium"/>
    <property type="evidence" value="ECO:0007669"/>
    <property type="project" value="UniProtKB-ARBA"/>
</dbReference>
<dbReference type="InterPro" id="IPR012521">
    <property type="entry name" value="Antimicrobial_frog_2"/>
</dbReference>
<dbReference type="InterPro" id="IPR004275">
    <property type="entry name" value="Frog_antimicrobial_propeptide"/>
</dbReference>
<dbReference type="Pfam" id="PF08023">
    <property type="entry name" value="Antimicrobial_2"/>
    <property type="match status" value="1"/>
</dbReference>
<dbReference type="Pfam" id="PF03032">
    <property type="entry name" value="FSAP_sig_propep"/>
    <property type="match status" value="1"/>
</dbReference>
<comment type="function">
    <text evidence="2">Antimicrobial peptide.</text>
</comment>
<comment type="subcellular location">
    <subcellularLocation>
        <location evidence="3 4">Secreted</location>
    </subcellularLocation>
</comment>
<comment type="tissue specificity">
    <text evidence="6">Expressed by the skin glands.</text>
</comment>
<comment type="mass spectrometry"/>
<comment type="similarity">
    <text evidence="3">Belongs to the frog skin active peptide (FSAP) family. Brevinin subfamily.</text>
</comment>
<proteinExistence type="evidence at protein level"/>
<sequence>MFTLKKSLLLLFFLGTISLSLCQEERNADEEDGGEVTEEEVKRSFLDTLKNLAISAAKGAGQSVLSTLSCKLSKTC</sequence>
<keyword id="KW-0878">Amphibian defense peptide</keyword>
<keyword id="KW-0929">Antimicrobial</keyword>
<keyword id="KW-0165">Cleavage on pair of basic residues</keyword>
<keyword id="KW-0903">Direct protein sequencing</keyword>
<keyword id="KW-1015">Disulfide bond</keyword>
<keyword id="KW-0964">Secreted</keyword>
<keyword id="KW-0732">Signal</keyword>
<reference evidence="7" key="1">
    <citation type="journal article" date="2006" name="Peptides">
        <title>Lividins: novel antimicrobial peptide homologs from the skin secretion of the Chinese Large Odorous frog, Rana (Odorrana) livida. Identification by 'shotgun' cDNA cloning and sequence analysis.</title>
        <authorList>
            <person name="Zhou M."/>
            <person name="Chen T."/>
            <person name="Walker B."/>
            <person name="Shaw C."/>
        </authorList>
    </citation>
    <scope>NUCLEOTIDE SEQUENCE [MRNA]</scope>
    <scope>PROTEIN SEQUENCE OF 44-76</scope>
    <scope>SUBCELLULAR LOCATION</scope>
    <scope>MASS SPECTROMETRY</scope>
    <scope>IDENTIFICATION BY MASS SPECTROMETRY</scope>
    <source>
        <tissue evidence="5">Skin secretion</tissue>
    </source>
</reference>
<protein>
    <recommendedName>
        <fullName evidence="5">Lividin-2</fullName>
    </recommendedName>
</protein>
<name>LDN2_ODOLI</name>
<evidence type="ECO:0000250" key="1">
    <source>
        <dbReference type="UniProtKB" id="A0AEI6"/>
    </source>
</evidence>
<evidence type="ECO:0000250" key="2">
    <source>
        <dbReference type="UniProtKB" id="E7EKE0"/>
    </source>
</evidence>
<evidence type="ECO:0000255" key="3"/>
<evidence type="ECO:0000269" key="4">
    <source>
    </source>
</evidence>
<evidence type="ECO:0000303" key="5">
    <source>
    </source>
</evidence>
<evidence type="ECO:0000305" key="6">
    <source>
    </source>
</evidence>
<evidence type="ECO:0000312" key="7">
    <source>
        <dbReference type="EMBL" id="CAJ01671.1"/>
    </source>
</evidence>
<accession>Q2UXR3</accession>
<feature type="signal peptide" evidence="3">
    <location>
        <begin position="1"/>
        <end position="22"/>
    </location>
</feature>
<feature type="propeptide" id="PRO_0000439436" evidence="6">
    <location>
        <begin position="23"/>
        <end position="41"/>
    </location>
</feature>
<feature type="peptide" id="PRO_0000439437" description="Lividin-2" evidence="4">
    <location>
        <begin position="44"/>
        <end position="76"/>
    </location>
</feature>
<feature type="disulfide bond" evidence="1">
    <location>
        <begin position="70"/>
        <end position="76"/>
    </location>
</feature>
<organism evidence="7">
    <name type="scientific">Odorrana livida</name>
    <name type="common">Green mountain frog</name>
    <name type="synonym">Polypedates lividus</name>
    <dbReference type="NCBI Taxonomy" id="121160"/>
    <lineage>
        <taxon>Eukaryota</taxon>
        <taxon>Metazoa</taxon>
        <taxon>Chordata</taxon>
        <taxon>Craniata</taxon>
        <taxon>Vertebrata</taxon>
        <taxon>Euteleostomi</taxon>
        <taxon>Amphibia</taxon>
        <taxon>Batrachia</taxon>
        <taxon>Anura</taxon>
        <taxon>Neobatrachia</taxon>
        <taxon>Ranoidea</taxon>
        <taxon>Ranidae</taxon>
        <taxon>Odorrana</taxon>
    </lineage>
</organism>